<name>RBFA_STRPD</name>
<comment type="function">
    <text evidence="1">One of several proteins that assist in the late maturation steps of the functional core of the 30S ribosomal subunit. Associates with free 30S ribosomal subunits (but not with 30S subunits that are part of 70S ribosomes or polysomes). Required for efficient processing of 16S rRNA. May interact with the 5'-terminal helix region of 16S rRNA.</text>
</comment>
<comment type="subunit">
    <text evidence="1">Monomer. Binds 30S ribosomal subunits, but not 50S ribosomal subunits or 70S ribosomes.</text>
</comment>
<comment type="subcellular location">
    <subcellularLocation>
        <location evidence="1">Cytoplasm</location>
    </subcellularLocation>
</comment>
<comment type="similarity">
    <text evidence="1">Belongs to the RbfA family.</text>
</comment>
<comment type="sequence caution" evidence="2">
    <conflict type="erroneous initiation">
        <sequence resource="EMBL-CDS" id="ABF34594"/>
    </conflict>
    <text>Extended N-terminus.</text>
</comment>
<feature type="chain" id="PRO_0000321258" description="Ribosome-binding factor A">
    <location>
        <begin position="1"/>
        <end position="116"/>
    </location>
</feature>
<reference key="1">
    <citation type="journal article" date="2006" name="Proc. Natl. Acad. Sci. U.S.A.">
        <title>Molecular genetic anatomy of inter- and intraserotype variation in the human bacterial pathogen group A Streptococcus.</title>
        <authorList>
            <person name="Beres S.B."/>
            <person name="Richter E.W."/>
            <person name="Nagiec M.J."/>
            <person name="Sumby P."/>
            <person name="Porcella S.F."/>
            <person name="DeLeo F.R."/>
            <person name="Musser J.M."/>
        </authorList>
    </citation>
    <scope>NUCLEOTIDE SEQUENCE [LARGE SCALE GENOMIC DNA]</scope>
    <source>
        <strain>MGAS10270</strain>
    </source>
</reference>
<organism>
    <name type="scientific">Streptococcus pyogenes serotype M2 (strain MGAS10270)</name>
    <dbReference type="NCBI Taxonomy" id="370552"/>
    <lineage>
        <taxon>Bacteria</taxon>
        <taxon>Bacillati</taxon>
        <taxon>Bacillota</taxon>
        <taxon>Bacilli</taxon>
        <taxon>Lactobacillales</taxon>
        <taxon>Streptococcaceae</taxon>
        <taxon>Streptococcus</taxon>
    </lineage>
</organism>
<dbReference type="EMBL" id="CP000260">
    <property type="protein sequence ID" value="ABF34594.1"/>
    <property type="status" value="ALT_INIT"/>
    <property type="molecule type" value="Genomic_DNA"/>
</dbReference>
<dbReference type="SMR" id="Q1JFG5"/>
<dbReference type="KEGG" id="sph:MGAS10270_Spy1529"/>
<dbReference type="HOGENOM" id="CLU_089475_3_0_9"/>
<dbReference type="Proteomes" id="UP000002436">
    <property type="component" value="Chromosome"/>
</dbReference>
<dbReference type="GO" id="GO:0005829">
    <property type="term" value="C:cytosol"/>
    <property type="evidence" value="ECO:0007669"/>
    <property type="project" value="TreeGrafter"/>
</dbReference>
<dbReference type="GO" id="GO:0043024">
    <property type="term" value="F:ribosomal small subunit binding"/>
    <property type="evidence" value="ECO:0007669"/>
    <property type="project" value="TreeGrafter"/>
</dbReference>
<dbReference type="GO" id="GO:0030490">
    <property type="term" value="P:maturation of SSU-rRNA"/>
    <property type="evidence" value="ECO:0007669"/>
    <property type="project" value="UniProtKB-UniRule"/>
</dbReference>
<dbReference type="Gene3D" id="3.30.300.20">
    <property type="match status" value="1"/>
</dbReference>
<dbReference type="HAMAP" id="MF_00003">
    <property type="entry name" value="RbfA"/>
    <property type="match status" value="1"/>
</dbReference>
<dbReference type="InterPro" id="IPR015946">
    <property type="entry name" value="KH_dom-like_a/b"/>
</dbReference>
<dbReference type="InterPro" id="IPR000238">
    <property type="entry name" value="RbfA"/>
</dbReference>
<dbReference type="InterPro" id="IPR023799">
    <property type="entry name" value="RbfA_dom_sf"/>
</dbReference>
<dbReference type="InterPro" id="IPR020053">
    <property type="entry name" value="Ribosome-bd_factorA_CS"/>
</dbReference>
<dbReference type="NCBIfam" id="TIGR00082">
    <property type="entry name" value="rbfA"/>
    <property type="match status" value="1"/>
</dbReference>
<dbReference type="PANTHER" id="PTHR33515">
    <property type="entry name" value="RIBOSOME-BINDING FACTOR A, CHLOROPLASTIC-RELATED"/>
    <property type="match status" value="1"/>
</dbReference>
<dbReference type="PANTHER" id="PTHR33515:SF1">
    <property type="entry name" value="RIBOSOME-BINDING FACTOR A, CHLOROPLASTIC-RELATED"/>
    <property type="match status" value="1"/>
</dbReference>
<dbReference type="Pfam" id="PF02033">
    <property type="entry name" value="RBFA"/>
    <property type="match status" value="1"/>
</dbReference>
<dbReference type="SUPFAM" id="SSF89919">
    <property type="entry name" value="Ribosome-binding factor A, RbfA"/>
    <property type="match status" value="1"/>
</dbReference>
<dbReference type="PROSITE" id="PS01319">
    <property type="entry name" value="RBFA"/>
    <property type="match status" value="1"/>
</dbReference>
<proteinExistence type="inferred from homology"/>
<keyword id="KW-0963">Cytoplasm</keyword>
<keyword id="KW-0690">Ribosome biogenesis</keyword>
<accession>Q1JFG5</accession>
<gene>
    <name evidence="1" type="primary">rbfA</name>
    <name type="ordered locus">MGAS10270_Spy1529</name>
</gene>
<sequence>MANHRIDRVGMEIKREVNDILQKKVRDPRVQGVTITEVQMQGDLSLAKVYYTIMSDLASDNQKAQTGLEKATGTIKRELGKQLTMYKIPDLVFEKDNSIAYGNKIDQLLRELDNKS</sequence>
<protein>
    <recommendedName>
        <fullName evidence="1">Ribosome-binding factor A</fullName>
    </recommendedName>
</protein>
<evidence type="ECO:0000255" key="1">
    <source>
        <dbReference type="HAMAP-Rule" id="MF_00003"/>
    </source>
</evidence>
<evidence type="ECO:0000305" key="2"/>